<evidence type="ECO:0000255" key="1">
    <source>
        <dbReference type="PROSITE-ProRule" id="PRU00219"/>
    </source>
</evidence>
<evidence type="ECO:0000255" key="2">
    <source>
        <dbReference type="PROSITE-ProRule" id="PRU00801"/>
    </source>
</evidence>
<evidence type="ECO:0000256" key="3">
    <source>
        <dbReference type="SAM" id="MobiDB-lite"/>
    </source>
</evidence>
<sequence>MIKNLISAFSQGVGIQKKELPSTIILNKDDYKEANYYNYYRNLELNKPDEVLARRIAGLAPIAYQYYNVSSFDNNQFKIVDFSIDSKLNDTCLTCVWTQTYKNESKTPVEAVYRIPLSPLSTVSAFSVQFNGKTLHGKIKDSTKAQEKYDDAIASGGQAFLAEKSKDDDNYFNFKLGNIPPTESSITIHITMISEIGSHLNSLHYLLHRYCFPQSSNYNFSLSLSVNLSNSIKSIFFDGDKSHSLQYENKEKTKCIIQYKKSLGFNTQPNILIVFELDDLNKPQSFIEKLSINKEDIKNNPHSDSDSDSDDEENKKENEKSSYAIALNFFPKFESINKEDIYQKGEFIFLIDCSGSMSGNPIDSARRALEIIIRSLNEQCKFNIYCFGSGFNKAFQEGSRKYDDDSLAVVNRYVSNISANLGGTELLQPIKDILSKEIDPEYPRQIFILTDGAVSDRSKLIEFVSKESKTTRIFTYGIGSSVDVELVVGLSKACKGYYTLIRNSSDMETEVMKLLSIAFEPTLSNVSFDWSQLLDLSNGKSTTIIQSPTQIRPIFNNERMMVYATIELDNDISNNIENHGQPVIVTMNADGPLGDRLSYHVELDFKNYSQSNSIHTLAAFKRIQDLEEIERKSSKETEKLEIIKLGKKYNLVSKHTSLVVTSDSDSPTEDTMKVINILPNNSQHPIIVDRCHTFAVNFNSPLQYQQQQQQQQQNFNSGFAPPPPPMMSSGPPPPPGSSFGAPPPPPPGGAFPTSSISEKKSSSQSSSSYLPPTMSLSRKSSLSPSSPSKNYPSPKLSSPSLSYGSTQSESTPSNDPLISLLAKQKANGSWSKSSIQDQFSSAISKIPNELSAVEDVWATLLVISKIMKTFASQKSKWELSVQKSNKWVKQQLLKLNLSFDQFLELAKSNV</sequence>
<dbReference type="EMBL" id="AAFI02000196">
    <property type="protein sequence ID" value="EAL61044.1"/>
    <property type="molecule type" value="Genomic_DNA"/>
</dbReference>
<dbReference type="RefSeq" id="XP_629483.1">
    <property type="nucleotide sequence ID" value="XM_629481.1"/>
</dbReference>
<dbReference type="SMR" id="Q54CQ8"/>
<dbReference type="FunCoup" id="Q54CQ8">
    <property type="interactions" value="6"/>
</dbReference>
<dbReference type="STRING" id="44689.Q54CQ8"/>
<dbReference type="GlyGen" id="Q54CQ8">
    <property type="glycosylation" value="2 sites"/>
</dbReference>
<dbReference type="PaxDb" id="44689-DDB0238133"/>
<dbReference type="EnsemblProtists" id="EAL61044">
    <property type="protein sequence ID" value="EAL61044"/>
    <property type="gene ID" value="DDB_G0292740"/>
</dbReference>
<dbReference type="GeneID" id="8628873"/>
<dbReference type="KEGG" id="ddi:DDB_G0292740"/>
<dbReference type="dictyBase" id="DDB_G0292740"/>
<dbReference type="VEuPathDB" id="AmoebaDB:DDB_G0292740"/>
<dbReference type="eggNOG" id="ENOG502QRPK">
    <property type="taxonomic scope" value="Eukaryota"/>
</dbReference>
<dbReference type="HOGENOM" id="CLU_327738_0_0_1"/>
<dbReference type="InParanoid" id="Q54CQ8"/>
<dbReference type="OMA" id="YSSMPCP"/>
<dbReference type="PhylomeDB" id="Q54CQ8"/>
<dbReference type="PRO" id="PR:Q54CQ8"/>
<dbReference type="Proteomes" id="UP000002195">
    <property type="component" value="Chromosome 6"/>
</dbReference>
<dbReference type="Gene3D" id="3.40.50.410">
    <property type="entry name" value="von Willebrand factor, type A domain"/>
    <property type="match status" value="1"/>
</dbReference>
<dbReference type="InterPro" id="IPR013694">
    <property type="entry name" value="VIT"/>
</dbReference>
<dbReference type="InterPro" id="IPR002035">
    <property type="entry name" value="VWF_A"/>
</dbReference>
<dbReference type="InterPro" id="IPR036465">
    <property type="entry name" value="vWFA_dom_sf"/>
</dbReference>
<dbReference type="PANTHER" id="PTHR45737">
    <property type="entry name" value="VON WILLEBRAND FACTOR A DOMAIN-CONTAINING PROTEIN 5A"/>
    <property type="match status" value="1"/>
</dbReference>
<dbReference type="PANTHER" id="PTHR45737:SF6">
    <property type="entry name" value="VON WILLEBRAND FACTOR A DOMAIN-CONTAINING PROTEIN 5A"/>
    <property type="match status" value="1"/>
</dbReference>
<dbReference type="Pfam" id="PF08487">
    <property type="entry name" value="VIT"/>
    <property type="match status" value="1"/>
</dbReference>
<dbReference type="Pfam" id="PF13768">
    <property type="entry name" value="VWA_3"/>
    <property type="match status" value="1"/>
</dbReference>
<dbReference type="SMART" id="SM00609">
    <property type="entry name" value="VIT"/>
    <property type="match status" value="1"/>
</dbReference>
<dbReference type="SMART" id="SM00327">
    <property type="entry name" value="VWA"/>
    <property type="match status" value="1"/>
</dbReference>
<dbReference type="SUPFAM" id="SSF53300">
    <property type="entry name" value="vWA-like"/>
    <property type="match status" value="1"/>
</dbReference>
<dbReference type="PROSITE" id="PS51468">
    <property type="entry name" value="VIT"/>
    <property type="match status" value="1"/>
</dbReference>
<dbReference type="PROSITE" id="PS50234">
    <property type="entry name" value="VWFA"/>
    <property type="match status" value="1"/>
</dbReference>
<organism>
    <name type="scientific">Dictyostelium discoideum</name>
    <name type="common">Social amoeba</name>
    <dbReference type="NCBI Taxonomy" id="44689"/>
    <lineage>
        <taxon>Eukaryota</taxon>
        <taxon>Amoebozoa</taxon>
        <taxon>Evosea</taxon>
        <taxon>Eumycetozoa</taxon>
        <taxon>Dictyostelia</taxon>
        <taxon>Dictyosteliales</taxon>
        <taxon>Dictyosteliaceae</taxon>
        <taxon>Dictyostelium</taxon>
    </lineage>
</organism>
<keyword id="KW-1185">Reference proteome</keyword>
<accession>Q54CQ8</accession>
<gene>
    <name type="ORF">DDB_G0292740</name>
</gene>
<feature type="chain" id="PRO_0000389210" description="von Willebrand factor A domain-containing protein DDB_G0292740">
    <location>
        <begin position="1"/>
        <end position="910"/>
    </location>
</feature>
<feature type="domain" description="VIT" evidence="2">
    <location>
        <begin position="63"/>
        <end position="194"/>
    </location>
</feature>
<feature type="domain" description="VWFA" evidence="1">
    <location>
        <begin position="346"/>
        <end position="515"/>
    </location>
</feature>
<feature type="region of interest" description="Disordered" evidence="3">
    <location>
        <begin position="297"/>
        <end position="318"/>
    </location>
</feature>
<feature type="region of interest" description="Disordered" evidence="3">
    <location>
        <begin position="703"/>
        <end position="815"/>
    </location>
</feature>
<feature type="compositionally biased region" description="Low complexity" evidence="3">
    <location>
        <begin position="703"/>
        <end position="719"/>
    </location>
</feature>
<feature type="compositionally biased region" description="Pro residues" evidence="3">
    <location>
        <begin position="720"/>
        <end position="749"/>
    </location>
</feature>
<feature type="compositionally biased region" description="Low complexity" evidence="3">
    <location>
        <begin position="750"/>
        <end position="802"/>
    </location>
</feature>
<feature type="compositionally biased region" description="Polar residues" evidence="3">
    <location>
        <begin position="803"/>
        <end position="815"/>
    </location>
</feature>
<protein>
    <recommendedName>
        <fullName>von Willebrand factor A domain-containing protein DDB_G0292740</fullName>
    </recommendedName>
</protein>
<name>Y2740_DICDI</name>
<proteinExistence type="predicted"/>
<reference key="1">
    <citation type="journal article" date="2005" name="Nature">
        <title>The genome of the social amoeba Dictyostelium discoideum.</title>
        <authorList>
            <person name="Eichinger L."/>
            <person name="Pachebat J.A."/>
            <person name="Gloeckner G."/>
            <person name="Rajandream M.A."/>
            <person name="Sucgang R."/>
            <person name="Berriman M."/>
            <person name="Song J."/>
            <person name="Olsen R."/>
            <person name="Szafranski K."/>
            <person name="Xu Q."/>
            <person name="Tunggal B."/>
            <person name="Kummerfeld S."/>
            <person name="Madera M."/>
            <person name="Konfortov B.A."/>
            <person name="Rivero F."/>
            <person name="Bankier A.T."/>
            <person name="Lehmann R."/>
            <person name="Hamlin N."/>
            <person name="Davies R."/>
            <person name="Gaudet P."/>
            <person name="Fey P."/>
            <person name="Pilcher K."/>
            <person name="Chen G."/>
            <person name="Saunders D."/>
            <person name="Sodergren E.J."/>
            <person name="Davis P."/>
            <person name="Kerhornou A."/>
            <person name="Nie X."/>
            <person name="Hall N."/>
            <person name="Anjard C."/>
            <person name="Hemphill L."/>
            <person name="Bason N."/>
            <person name="Farbrother P."/>
            <person name="Desany B."/>
            <person name="Just E."/>
            <person name="Morio T."/>
            <person name="Rost R."/>
            <person name="Churcher C.M."/>
            <person name="Cooper J."/>
            <person name="Haydock S."/>
            <person name="van Driessche N."/>
            <person name="Cronin A."/>
            <person name="Goodhead I."/>
            <person name="Muzny D.M."/>
            <person name="Mourier T."/>
            <person name="Pain A."/>
            <person name="Lu M."/>
            <person name="Harper D."/>
            <person name="Lindsay R."/>
            <person name="Hauser H."/>
            <person name="James K.D."/>
            <person name="Quiles M."/>
            <person name="Madan Babu M."/>
            <person name="Saito T."/>
            <person name="Buchrieser C."/>
            <person name="Wardroper A."/>
            <person name="Felder M."/>
            <person name="Thangavelu M."/>
            <person name="Johnson D."/>
            <person name="Knights A."/>
            <person name="Loulseged H."/>
            <person name="Mungall K.L."/>
            <person name="Oliver K."/>
            <person name="Price C."/>
            <person name="Quail M.A."/>
            <person name="Urushihara H."/>
            <person name="Hernandez J."/>
            <person name="Rabbinowitsch E."/>
            <person name="Steffen D."/>
            <person name="Sanders M."/>
            <person name="Ma J."/>
            <person name="Kohara Y."/>
            <person name="Sharp S."/>
            <person name="Simmonds M.N."/>
            <person name="Spiegler S."/>
            <person name="Tivey A."/>
            <person name="Sugano S."/>
            <person name="White B."/>
            <person name="Walker D."/>
            <person name="Woodward J.R."/>
            <person name="Winckler T."/>
            <person name="Tanaka Y."/>
            <person name="Shaulsky G."/>
            <person name="Schleicher M."/>
            <person name="Weinstock G.M."/>
            <person name="Rosenthal A."/>
            <person name="Cox E.C."/>
            <person name="Chisholm R.L."/>
            <person name="Gibbs R.A."/>
            <person name="Loomis W.F."/>
            <person name="Platzer M."/>
            <person name="Kay R.R."/>
            <person name="Williams J.G."/>
            <person name="Dear P.H."/>
            <person name="Noegel A.A."/>
            <person name="Barrell B.G."/>
            <person name="Kuspa A."/>
        </authorList>
    </citation>
    <scope>NUCLEOTIDE SEQUENCE [LARGE SCALE GENOMIC DNA]</scope>
    <source>
        <strain>AX4</strain>
    </source>
</reference>